<keyword id="KW-1185">Reference proteome</keyword>
<keyword id="KW-0687">Ribonucleoprotein</keyword>
<keyword id="KW-0689">Ribosomal protein</keyword>
<keyword id="KW-0694">RNA-binding</keyword>
<keyword id="KW-0699">rRNA-binding</keyword>
<name>RS20_YERPE</name>
<sequence length="87" mass="9789">MANIKSAKKRAVQSEKRRKHNASRRSMVRTFIKKVYAAIAAGDKDAAQKAFNEMQPIVDRQSCKGLIHKNKAARHKSNLVAQINAMQ</sequence>
<reference key="1">
    <citation type="journal article" date="2001" name="Nature">
        <title>Genome sequence of Yersinia pestis, the causative agent of plague.</title>
        <authorList>
            <person name="Parkhill J."/>
            <person name="Wren B.W."/>
            <person name="Thomson N.R."/>
            <person name="Titball R.W."/>
            <person name="Holden M.T.G."/>
            <person name="Prentice M.B."/>
            <person name="Sebaihia M."/>
            <person name="James K.D."/>
            <person name="Churcher C.M."/>
            <person name="Mungall K.L."/>
            <person name="Baker S."/>
            <person name="Basham D."/>
            <person name="Bentley S.D."/>
            <person name="Brooks K."/>
            <person name="Cerdeno-Tarraga A.-M."/>
            <person name="Chillingworth T."/>
            <person name="Cronin A."/>
            <person name="Davies R.M."/>
            <person name="Davis P."/>
            <person name="Dougan G."/>
            <person name="Feltwell T."/>
            <person name="Hamlin N."/>
            <person name="Holroyd S."/>
            <person name="Jagels K."/>
            <person name="Karlyshev A.V."/>
            <person name="Leather S."/>
            <person name="Moule S."/>
            <person name="Oyston P.C.F."/>
            <person name="Quail M.A."/>
            <person name="Rutherford K.M."/>
            <person name="Simmonds M."/>
            <person name="Skelton J."/>
            <person name="Stevens K."/>
            <person name="Whitehead S."/>
            <person name="Barrell B.G."/>
        </authorList>
    </citation>
    <scope>NUCLEOTIDE SEQUENCE [LARGE SCALE GENOMIC DNA]</scope>
    <source>
        <strain>CO-92 / Biovar Orientalis</strain>
    </source>
</reference>
<reference key="2">
    <citation type="journal article" date="2002" name="J. Bacteriol.">
        <title>Genome sequence of Yersinia pestis KIM.</title>
        <authorList>
            <person name="Deng W."/>
            <person name="Burland V."/>
            <person name="Plunkett G. III"/>
            <person name="Boutin A."/>
            <person name="Mayhew G.F."/>
            <person name="Liss P."/>
            <person name="Perna N.T."/>
            <person name="Rose D.J."/>
            <person name="Mau B."/>
            <person name="Zhou S."/>
            <person name="Schwartz D.C."/>
            <person name="Fetherston J.D."/>
            <person name="Lindler L.E."/>
            <person name="Brubaker R.R."/>
            <person name="Plano G.V."/>
            <person name="Straley S.C."/>
            <person name="McDonough K.A."/>
            <person name="Nilles M.L."/>
            <person name="Matson J.S."/>
            <person name="Blattner F.R."/>
            <person name="Perry R.D."/>
        </authorList>
    </citation>
    <scope>NUCLEOTIDE SEQUENCE [LARGE SCALE GENOMIC DNA]</scope>
    <source>
        <strain>KIM10+ / Biovar Mediaevalis</strain>
    </source>
</reference>
<reference key="3">
    <citation type="journal article" date="2004" name="DNA Res.">
        <title>Complete genome sequence of Yersinia pestis strain 91001, an isolate avirulent to humans.</title>
        <authorList>
            <person name="Song Y."/>
            <person name="Tong Z."/>
            <person name="Wang J."/>
            <person name="Wang L."/>
            <person name="Guo Z."/>
            <person name="Han Y."/>
            <person name="Zhang J."/>
            <person name="Pei D."/>
            <person name="Zhou D."/>
            <person name="Qin H."/>
            <person name="Pang X."/>
            <person name="Han Y."/>
            <person name="Zhai J."/>
            <person name="Li M."/>
            <person name="Cui B."/>
            <person name="Qi Z."/>
            <person name="Jin L."/>
            <person name="Dai R."/>
            <person name="Chen F."/>
            <person name="Li S."/>
            <person name="Ye C."/>
            <person name="Du Z."/>
            <person name="Lin W."/>
            <person name="Wang J."/>
            <person name="Yu J."/>
            <person name="Yang H."/>
            <person name="Wang J."/>
            <person name="Huang P."/>
            <person name="Yang R."/>
        </authorList>
    </citation>
    <scope>NUCLEOTIDE SEQUENCE [LARGE SCALE GENOMIC DNA]</scope>
    <source>
        <strain>91001 / Biovar Mediaevalis</strain>
    </source>
</reference>
<gene>
    <name evidence="1" type="primary">rpsT</name>
    <name type="ordered locus">YPO0472</name>
    <name type="ordered locus">y3702</name>
    <name type="ordered locus">YP_3708</name>
</gene>
<feature type="chain" id="PRO_0000168068" description="Small ribosomal subunit protein bS20">
    <location>
        <begin position="1"/>
        <end position="87"/>
    </location>
</feature>
<feature type="region of interest" description="Disordered" evidence="2">
    <location>
        <begin position="1"/>
        <end position="25"/>
    </location>
</feature>
<organism>
    <name type="scientific">Yersinia pestis</name>
    <dbReference type="NCBI Taxonomy" id="632"/>
    <lineage>
        <taxon>Bacteria</taxon>
        <taxon>Pseudomonadati</taxon>
        <taxon>Pseudomonadota</taxon>
        <taxon>Gammaproteobacteria</taxon>
        <taxon>Enterobacterales</taxon>
        <taxon>Yersiniaceae</taxon>
        <taxon>Yersinia</taxon>
    </lineage>
</organism>
<accession>Q8ZIM3</accession>
<accession>Q0WJJ4</accession>
<proteinExistence type="inferred from homology"/>
<protein>
    <recommendedName>
        <fullName evidence="1">Small ribosomal subunit protein bS20</fullName>
    </recommendedName>
    <alternativeName>
        <fullName evidence="3">30S ribosomal protein S20</fullName>
    </alternativeName>
</protein>
<evidence type="ECO:0000255" key="1">
    <source>
        <dbReference type="HAMAP-Rule" id="MF_00500"/>
    </source>
</evidence>
<evidence type="ECO:0000256" key="2">
    <source>
        <dbReference type="SAM" id="MobiDB-lite"/>
    </source>
</evidence>
<evidence type="ECO:0000305" key="3"/>
<dbReference type="EMBL" id="AL590842">
    <property type="protein sequence ID" value="CAL19151.1"/>
    <property type="molecule type" value="Genomic_DNA"/>
</dbReference>
<dbReference type="EMBL" id="AE009952">
    <property type="protein sequence ID" value="AAM87250.1"/>
    <property type="molecule type" value="Genomic_DNA"/>
</dbReference>
<dbReference type="EMBL" id="AE017042">
    <property type="protein sequence ID" value="AAS63856.1"/>
    <property type="molecule type" value="Genomic_DNA"/>
</dbReference>
<dbReference type="PIR" id="AE0058">
    <property type="entry name" value="AE0058"/>
</dbReference>
<dbReference type="RefSeq" id="WP_002220715.1">
    <property type="nucleotide sequence ID" value="NZ_WUCM01000002.1"/>
</dbReference>
<dbReference type="RefSeq" id="YP_002345544.1">
    <property type="nucleotide sequence ID" value="NC_003143.1"/>
</dbReference>
<dbReference type="SMR" id="Q8ZIM3"/>
<dbReference type="STRING" id="214092.YPO0472"/>
<dbReference type="PaxDb" id="214092-YPO0472"/>
<dbReference type="DNASU" id="1148649"/>
<dbReference type="EnsemblBacteria" id="AAS63856">
    <property type="protein sequence ID" value="AAS63856"/>
    <property type="gene ID" value="YP_3708"/>
</dbReference>
<dbReference type="GeneID" id="97457675"/>
<dbReference type="KEGG" id="ype:YPO0472"/>
<dbReference type="KEGG" id="ypk:y3702"/>
<dbReference type="KEGG" id="ypm:YP_3708"/>
<dbReference type="PATRIC" id="fig|214092.21.peg.720"/>
<dbReference type="eggNOG" id="COG0268">
    <property type="taxonomic scope" value="Bacteria"/>
</dbReference>
<dbReference type="HOGENOM" id="CLU_160655_4_0_6"/>
<dbReference type="OMA" id="GVIHKNA"/>
<dbReference type="OrthoDB" id="9807974at2"/>
<dbReference type="Proteomes" id="UP000000815">
    <property type="component" value="Chromosome"/>
</dbReference>
<dbReference type="Proteomes" id="UP000001019">
    <property type="component" value="Chromosome"/>
</dbReference>
<dbReference type="Proteomes" id="UP000002490">
    <property type="component" value="Chromosome"/>
</dbReference>
<dbReference type="GO" id="GO:0005829">
    <property type="term" value="C:cytosol"/>
    <property type="evidence" value="ECO:0000318"/>
    <property type="project" value="GO_Central"/>
</dbReference>
<dbReference type="GO" id="GO:0015935">
    <property type="term" value="C:small ribosomal subunit"/>
    <property type="evidence" value="ECO:0000318"/>
    <property type="project" value="GO_Central"/>
</dbReference>
<dbReference type="GO" id="GO:0070181">
    <property type="term" value="F:small ribosomal subunit rRNA binding"/>
    <property type="evidence" value="ECO:0000318"/>
    <property type="project" value="GO_Central"/>
</dbReference>
<dbReference type="GO" id="GO:0003735">
    <property type="term" value="F:structural constituent of ribosome"/>
    <property type="evidence" value="ECO:0007669"/>
    <property type="project" value="InterPro"/>
</dbReference>
<dbReference type="GO" id="GO:0006412">
    <property type="term" value="P:translation"/>
    <property type="evidence" value="ECO:0007669"/>
    <property type="project" value="UniProtKB-UniRule"/>
</dbReference>
<dbReference type="FunFam" id="1.20.58.110:FF:000001">
    <property type="entry name" value="30S ribosomal protein S20"/>
    <property type="match status" value="1"/>
</dbReference>
<dbReference type="Gene3D" id="1.20.58.110">
    <property type="entry name" value="Ribosomal protein S20"/>
    <property type="match status" value="1"/>
</dbReference>
<dbReference type="HAMAP" id="MF_00500">
    <property type="entry name" value="Ribosomal_bS20"/>
    <property type="match status" value="1"/>
</dbReference>
<dbReference type="InterPro" id="IPR002583">
    <property type="entry name" value="Ribosomal_bS20"/>
</dbReference>
<dbReference type="InterPro" id="IPR036510">
    <property type="entry name" value="Ribosomal_bS20_sf"/>
</dbReference>
<dbReference type="NCBIfam" id="TIGR00029">
    <property type="entry name" value="S20"/>
    <property type="match status" value="1"/>
</dbReference>
<dbReference type="PANTHER" id="PTHR33398">
    <property type="entry name" value="30S RIBOSOMAL PROTEIN S20"/>
    <property type="match status" value="1"/>
</dbReference>
<dbReference type="PANTHER" id="PTHR33398:SF1">
    <property type="entry name" value="SMALL RIBOSOMAL SUBUNIT PROTEIN BS20C"/>
    <property type="match status" value="1"/>
</dbReference>
<dbReference type="Pfam" id="PF01649">
    <property type="entry name" value="Ribosomal_S20p"/>
    <property type="match status" value="1"/>
</dbReference>
<dbReference type="SUPFAM" id="SSF46992">
    <property type="entry name" value="Ribosomal protein S20"/>
    <property type="match status" value="1"/>
</dbReference>
<comment type="function">
    <text evidence="1">Binds directly to 16S ribosomal RNA.</text>
</comment>
<comment type="similarity">
    <text evidence="1">Belongs to the bacterial ribosomal protein bS20 family.</text>
</comment>